<dbReference type="EMBL" id="CP000255">
    <property type="protein sequence ID" value="ABD22346.1"/>
    <property type="molecule type" value="Genomic_DNA"/>
</dbReference>
<dbReference type="RefSeq" id="WP_000480800.1">
    <property type="nucleotide sequence ID" value="NZ_CP027476.1"/>
</dbReference>
<dbReference type="SMR" id="Q2FHQ9"/>
<dbReference type="GeneID" id="66839371"/>
<dbReference type="KEGG" id="saa:SAUSA300_1072"/>
<dbReference type="HOGENOM" id="CLU_107907_0_5_9"/>
<dbReference type="OMA" id="ECELDGN"/>
<dbReference type="Proteomes" id="UP000001939">
    <property type="component" value="Chromosome"/>
</dbReference>
<dbReference type="GO" id="GO:0005737">
    <property type="term" value="C:cytoplasm"/>
    <property type="evidence" value="ECO:0007669"/>
    <property type="project" value="UniProtKB-UniRule"/>
</dbReference>
<dbReference type="GO" id="GO:0009295">
    <property type="term" value="C:nucleoid"/>
    <property type="evidence" value="ECO:0007669"/>
    <property type="project" value="UniProtKB-SubCell"/>
</dbReference>
<dbReference type="GO" id="GO:0003700">
    <property type="term" value="F:DNA-binding transcription factor activity"/>
    <property type="evidence" value="ECO:0007669"/>
    <property type="project" value="UniProtKB-UniRule"/>
</dbReference>
<dbReference type="GO" id="GO:0000976">
    <property type="term" value="F:transcription cis-regulatory region binding"/>
    <property type="evidence" value="ECO:0007669"/>
    <property type="project" value="TreeGrafter"/>
</dbReference>
<dbReference type="GO" id="GO:2000143">
    <property type="term" value="P:negative regulation of DNA-templated transcription initiation"/>
    <property type="evidence" value="ECO:0007669"/>
    <property type="project" value="TreeGrafter"/>
</dbReference>
<dbReference type="CDD" id="cd16321">
    <property type="entry name" value="MraZ_C"/>
    <property type="match status" value="1"/>
</dbReference>
<dbReference type="CDD" id="cd16320">
    <property type="entry name" value="MraZ_N"/>
    <property type="match status" value="1"/>
</dbReference>
<dbReference type="FunFam" id="3.40.1550.20:FF:000002">
    <property type="entry name" value="Transcriptional regulator MraZ"/>
    <property type="match status" value="1"/>
</dbReference>
<dbReference type="Gene3D" id="3.40.1550.20">
    <property type="entry name" value="Transcriptional regulator MraZ domain"/>
    <property type="match status" value="1"/>
</dbReference>
<dbReference type="HAMAP" id="MF_01008">
    <property type="entry name" value="MraZ"/>
    <property type="match status" value="1"/>
</dbReference>
<dbReference type="InterPro" id="IPR003444">
    <property type="entry name" value="MraZ"/>
</dbReference>
<dbReference type="InterPro" id="IPR035644">
    <property type="entry name" value="MraZ_C"/>
</dbReference>
<dbReference type="InterPro" id="IPR020603">
    <property type="entry name" value="MraZ_dom"/>
</dbReference>
<dbReference type="InterPro" id="IPR035642">
    <property type="entry name" value="MraZ_N"/>
</dbReference>
<dbReference type="InterPro" id="IPR038619">
    <property type="entry name" value="MraZ_sf"/>
</dbReference>
<dbReference type="InterPro" id="IPR007159">
    <property type="entry name" value="SpoVT-AbrB_dom"/>
</dbReference>
<dbReference type="InterPro" id="IPR037914">
    <property type="entry name" value="SpoVT-AbrB_sf"/>
</dbReference>
<dbReference type="NCBIfam" id="TIGR00242">
    <property type="entry name" value="division/cell wall cluster transcriptional repressor MraZ"/>
    <property type="match status" value="1"/>
</dbReference>
<dbReference type="PANTHER" id="PTHR34701">
    <property type="entry name" value="TRANSCRIPTIONAL REGULATOR MRAZ"/>
    <property type="match status" value="1"/>
</dbReference>
<dbReference type="PANTHER" id="PTHR34701:SF1">
    <property type="entry name" value="TRANSCRIPTIONAL REGULATOR MRAZ"/>
    <property type="match status" value="1"/>
</dbReference>
<dbReference type="Pfam" id="PF02381">
    <property type="entry name" value="MraZ"/>
    <property type="match status" value="2"/>
</dbReference>
<dbReference type="SUPFAM" id="SSF89447">
    <property type="entry name" value="AbrB/MazE/MraZ-like"/>
    <property type="match status" value="1"/>
</dbReference>
<dbReference type="PROSITE" id="PS51740">
    <property type="entry name" value="SPOVT_ABRB"/>
    <property type="match status" value="2"/>
</dbReference>
<proteinExistence type="inferred from homology"/>
<reference key="1">
    <citation type="journal article" date="2006" name="Lancet">
        <title>Complete genome sequence of USA300, an epidemic clone of community-acquired meticillin-resistant Staphylococcus aureus.</title>
        <authorList>
            <person name="Diep B.A."/>
            <person name="Gill S.R."/>
            <person name="Chang R.F."/>
            <person name="Phan T.H."/>
            <person name="Chen J.H."/>
            <person name="Davidson M.G."/>
            <person name="Lin F."/>
            <person name="Lin J."/>
            <person name="Carleton H.A."/>
            <person name="Mongodin E.F."/>
            <person name="Sensabaugh G.F."/>
            <person name="Perdreau-Remington F."/>
        </authorList>
    </citation>
    <scope>NUCLEOTIDE SEQUENCE [LARGE SCALE GENOMIC DNA]</scope>
    <source>
        <strain>USA300</strain>
    </source>
</reference>
<protein>
    <recommendedName>
        <fullName>Transcriptional regulator MraZ</fullName>
    </recommendedName>
</protein>
<organism>
    <name type="scientific">Staphylococcus aureus (strain USA300)</name>
    <dbReference type="NCBI Taxonomy" id="367830"/>
    <lineage>
        <taxon>Bacteria</taxon>
        <taxon>Bacillati</taxon>
        <taxon>Bacillota</taxon>
        <taxon>Bacilli</taxon>
        <taxon>Bacillales</taxon>
        <taxon>Staphylococcaceae</taxon>
        <taxon>Staphylococcus</taxon>
    </lineage>
</organism>
<sequence length="143" mass="17238">MFMGEYDHQLDTKGRMIIPSKFRYDLNERFIITRGLDKCLFGYTLDEWQQIEEKMKTLPMTKKDARKFMRMFFSGAVEVELDKQGRINIPQNLRKYANLTKECTVIGVSNRIEIWDRETWNDFYEESEESFEDIAEDLIDFDF</sequence>
<evidence type="ECO:0000255" key="1">
    <source>
        <dbReference type="HAMAP-Rule" id="MF_01008"/>
    </source>
</evidence>
<evidence type="ECO:0000255" key="2">
    <source>
        <dbReference type="PROSITE-ProRule" id="PRU01076"/>
    </source>
</evidence>
<feature type="chain" id="PRO_1000062943" description="Transcriptional regulator MraZ">
    <location>
        <begin position="1"/>
        <end position="143"/>
    </location>
</feature>
<feature type="domain" description="SpoVT-AbrB 1" evidence="2">
    <location>
        <begin position="5"/>
        <end position="47"/>
    </location>
</feature>
<feature type="domain" description="SpoVT-AbrB 2" evidence="2">
    <location>
        <begin position="76"/>
        <end position="119"/>
    </location>
</feature>
<name>MRAZ_STAA3</name>
<keyword id="KW-0963">Cytoplasm</keyword>
<keyword id="KW-0238">DNA-binding</keyword>
<keyword id="KW-0677">Repeat</keyword>
<keyword id="KW-0804">Transcription</keyword>
<keyword id="KW-0805">Transcription regulation</keyword>
<gene>
    <name evidence="1" type="primary">mraZ</name>
    <name type="ordered locus">SAUSA300_1072</name>
</gene>
<accession>Q2FHQ9</accession>
<comment type="subunit">
    <text evidence="1">Forms oligomers.</text>
</comment>
<comment type="subcellular location">
    <subcellularLocation>
        <location evidence="1">Cytoplasm</location>
        <location evidence="1">Nucleoid</location>
    </subcellularLocation>
</comment>
<comment type="similarity">
    <text evidence="1">Belongs to the MraZ family.</text>
</comment>